<protein>
    <recommendedName>
        <fullName evidence="1">Large ribosomal subunit protein uL22</fullName>
    </recommendedName>
    <alternativeName>
        <fullName evidence="2">50S ribosomal protein L22</fullName>
    </alternativeName>
</protein>
<keyword id="KW-0687">Ribonucleoprotein</keyword>
<keyword id="KW-0689">Ribosomal protein</keyword>
<keyword id="KW-0694">RNA-binding</keyword>
<keyword id="KW-0699">rRNA-binding</keyword>
<evidence type="ECO:0000255" key="1">
    <source>
        <dbReference type="HAMAP-Rule" id="MF_01331"/>
    </source>
</evidence>
<evidence type="ECO:0000305" key="2"/>
<feature type="chain" id="PRO_1000086569" description="Large ribosomal subunit protein uL22">
    <location>
        <begin position="1"/>
        <end position="110"/>
    </location>
</feature>
<gene>
    <name evidence="1" type="primary">rplV</name>
    <name type="ordered locus">Sbal195_0205</name>
</gene>
<comment type="function">
    <text evidence="1">This protein binds specifically to 23S rRNA; its binding is stimulated by other ribosomal proteins, e.g. L4, L17, and L20. It is important during the early stages of 50S assembly. It makes multiple contacts with different domains of the 23S rRNA in the assembled 50S subunit and ribosome (By similarity).</text>
</comment>
<comment type="function">
    <text evidence="1">The globular domain of the protein is located near the polypeptide exit tunnel on the outside of the subunit, while an extended beta-hairpin is found that lines the wall of the exit tunnel in the center of the 70S ribosome.</text>
</comment>
<comment type="subunit">
    <text evidence="1">Part of the 50S ribosomal subunit.</text>
</comment>
<comment type="similarity">
    <text evidence="1">Belongs to the universal ribosomal protein uL22 family.</text>
</comment>
<name>RL22_SHEB9</name>
<accession>A9KWA7</accession>
<sequence length="110" mass="12071">MEVLAKHRFARTSAQKARLVADQIRGLPVAKALEILTFSPKKAAVLVKKVLDSAIANAEHNEGADIDELKVGAVFVDEGPTMKRIMPRAKGRADRIMKRTSHITVVVSDR</sequence>
<dbReference type="EMBL" id="CP000891">
    <property type="protein sequence ID" value="ABX47387.1"/>
    <property type="molecule type" value="Genomic_DNA"/>
</dbReference>
<dbReference type="RefSeq" id="WP_006083595.1">
    <property type="nucleotide sequence ID" value="NC_009997.1"/>
</dbReference>
<dbReference type="SMR" id="A9KWA7"/>
<dbReference type="GeneID" id="94726191"/>
<dbReference type="KEGG" id="sbn:Sbal195_0205"/>
<dbReference type="HOGENOM" id="CLU_083987_3_3_6"/>
<dbReference type="Proteomes" id="UP000000770">
    <property type="component" value="Chromosome"/>
</dbReference>
<dbReference type="GO" id="GO:0022625">
    <property type="term" value="C:cytosolic large ribosomal subunit"/>
    <property type="evidence" value="ECO:0007669"/>
    <property type="project" value="TreeGrafter"/>
</dbReference>
<dbReference type="GO" id="GO:0019843">
    <property type="term" value="F:rRNA binding"/>
    <property type="evidence" value="ECO:0007669"/>
    <property type="project" value="UniProtKB-UniRule"/>
</dbReference>
<dbReference type="GO" id="GO:0003735">
    <property type="term" value="F:structural constituent of ribosome"/>
    <property type="evidence" value="ECO:0007669"/>
    <property type="project" value="InterPro"/>
</dbReference>
<dbReference type="GO" id="GO:0006412">
    <property type="term" value="P:translation"/>
    <property type="evidence" value="ECO:0007669"/>
    <property type="project" value="UniProtKB-UniRule"/>
</dbReference>
<dbReference type="CDD" id="cd00336">
    <property type="entry name" value="Ribosomal_L22"/>
    <property type="match status" value="1"/>
</dbReference>
<dbReference type="FunFam" id="3.90.470.10:FF:000001">
    <property type="entry name" value="50S ribosomal protein L22"/>
    <property type="match status" value="1"/>
</dbReference>
<dbReference type="Gene3D" id="3.90.470.10">
    <property type="entry name" value="Ribosomal protein L22/L17"/>
    <property type="match status" value="1"/>
</dbReference>
<dbReference type="HAMAP" id="MF_01331_B">
    <property type="entry name" value="Ribosomal_uL22_B"/>
    <property type="match status" value="1"/>
</dbReference>
<dbReference type="InterPro" id="IPR001063">
    <property type="entry name" value="Ribosomal_uL22"/>
</dbReference>
<dbReference type="InterPro" id="IPR005727">
    <property type="entry name" value="Ribosomal_uL22_bac/chlpt-type"/>
</dbReference>
<dbReference type="InterPro" id="IPR047867">
    <property type="entry name" value="Ribosomal_uL22_bac/org-type"/>
</dbReference>
<dbReference type="InterPro" id="IPR018260">
    <property type="entry name" value="Ribosomal_uL22_CS"/>
</dbReference>
<dbReference type="InterPro" id="IPR036394">
    <property type="entry name" value="Ribosomal_uL22_sf"/>
</dbReference>
<dbReference type="NCBIfam" id="TIGR01044">
    <property type="entry name" value="rplV_bact"/>
    <property type="match status" value="1"/>
</dbReference>
<dbReference type="PANTHER" id="PTHR13501">
    <property type="entry name" value="CHLOROPLAST 50S RIBOSOMAL PROTEIN L22-RELATED"/>
    <property type="match status" value="1"/>
</dbReference>
<dbReference type="PANTHER" id="PTHR13501:SF8">
    <property type="entry name" value="LARGE RIBOSOMAL SUBUNIT PROTEIN UL22M"/>
    <property type="match status" value="1"/>
</dbReference>
<dbReference type="Pfam" id="PF00237">
    <property type="entry name" value="Ribosomal_L22"/>
    <property type="match status" value="1"/>
</dbReference>
<dbReference type="SUPFAM" id="SSF54843">
    <property type="entry name" value="Ribosomal protein L22"/>
    <property type="match status" value="1"/>
</dbReference>
<dbReference type="PROSITE" id="PS00464">
    <property type="entry name" value="RIBOSOMAL_L22"/>
    <property type="match status" value="1"/>
</dbReference>
<reference key="1">
    <citation type="submission" date="2007-11" db="EMBL/GenBank/DDBJ databases">
        <title>Complete sequence of chromosome of Shewanella baltica OS195.</title>
        <authorList>
            <consortium name="US DOE Joint Genome Institute"/>
            <person name="Copeland A."/>
            <person name="Lucas S."/>
            <person name="Lapidus A."/>
            <person name="Barry K."/>
            <person name="Glavina del Rio T."/>
            <person name="Dalin E."/>
            <person name="Tice H."/>
            <person name="Pitluck S."/>
            <person name="Chain P."/>
            <person name="Malfatti S."/>
            <person name="Shin M."/>
            <person name="Vergez L."/>
            <person name="Schmutz J."/>
            <person name="Larimer F."/>
            <person name="Land M."/>
            <person name="Hauser L."/>
            <person name="Kyrpides N."/>
            <person name="Kim E."/>
            <person name="Brettar I."/>
            <person name="Rodrigues J."/>
            <person name="Konstantinidis K."/>
            <person name="Klappenbach J."/>
            <person name="Hofle M."/>
            <person name="Tiedje J."/>
            <person name="Richardson P."/>
        </authorList>
    </citation>
    <scope>NUCLEOTIDE SEQUENCE [LARGE SCALE GENOMIC DNA]</scope>
    <source>
        <strain>OS195</strain>
    </source>
</reference>
<proteinExistence type="inferred from homology"/>
<organism>
    <name type="scientific">Shewanella baltica (strain OS195)</name>
    <dbReference type="NCBI Taxonomy" id="399599"/>
    <lineage>
        <taxon>Bacteria</taxon>
        <taxon>Pseudomonadati</taxon>
        <taxon>Pseudomonadota</taxon>
        <taxon>Gammaproteobacteria</taxon>
        <taxon>Alteromonadales</taxon>
        <taxon>Shewanellaceae</taxon>
        <taxon>Shewanella</taxon>
    </lineage>
</organism>